<comment type="subcellular location">
    <subcellularLocation>
        <location evidence="2">Membrane</location>
        <topology evidence="2">Multi-pass membrane protein</topology>
    </subcellularLocation>
</comment>
<comment type="similarity">
    <text evidence="2">Belongs to the major facilitator superfamily.</text>
</comment>
<keyword id="KW-0325">Glycoprotein</keyword>
<keyword id="KW-0472">Membrane</keyword>
<keyword id="KW-1185">Reference proteome</keyword>
<keyword id="KW-0812">Transmembrane</keyword>
<keyword id="KW-1133">Transmembrane helix</keyword>
<keyword id="KW-0813">Transport</keyword>
<gene>
    <name type="primary">MFSD4A</name>
    <name type="synonym">MFSD4</name>
</gene>
<reference key="1">
    <citation type="submission" date="2004-11" db="EMBL/GenBank/DDBJ databases">
        <authorList>
            <consortium name="The German cDNA consortium"/>
        </authorList>
    </citation>
    <scope>NUCLEOTIDE SEQUENCE [LARGE SCALE MRNA]</scope>
    <source>
        <tissue>Kidney</tissue>
    </source>
</reference>
<name>MFD4A_PONAB</name>
<proteinExistence type="evidence at transcript level"/>
<protein>
    <recommendedName>
        <fullName>Major facilitator superfamily domain-containing protein 4A</fullName>
    </recommendedName>
    <alternativeName>
        <fullName>Major facilitator superfamily domain-containing protein 4</fullName>
    </alternativeName>
</protein>
<organism>
    <name type="scientific">Pongo abelii</name>
    <name type="common">Sumatran orangutan</name>
    <name type="synonym">Pongo pygmaeus abelii</name>
    <dbReference type="NCBI Taxonomy" id="9601"/>
    <lineage>
        <taxon>Eukaryota</taxon>
        <taxon>Metazoa</taxon>
        <taxon>Chordata</taxon>
        <taxon>Craniata</taxon>
        <taxon>Vertebrata</taxon>
        <taxon>Euteleostomi</taxon>
        <taxon>Mammalia</taxon>
        <taxon>Eutheria</taxon>
        <taxon>Euarchontoglires</taxon>
        <taxon>Primates</taxon>
        <taxon>Haplorrhini</taxon>
        <taxon>Catarrhini</taxon>
        <taxon>Hominidae</taxon>
        <taxon>Pongo</taxon>
    </lineage>
</organism>
<dbReference type="EMBL" id="CR858233">
    <property type="protein sequence ID" value="CAH90470.1"/>
    <property type="molecule type" value="mRNA"/>
</dbReference>
<dbReference type="RefSeq" id="NP_001125244.1">
    <property type="nucleotide sequence ID" value="NM_001131772.1"/>
</dbReference>
<dbReference type="FunCoup" id="Q5RCN7">
    <property type="interactions" value="56"/>
</dbReference>
<dbReference type="GlyCosmos" id="Q5RCN7">
    <property type="glycosylation" value="2 sites, No reported glycans"/>
</dbReference>
<dbReference type="GeneID" id="100172139"/>
<dbReference type="KEGG" id="pon:100172139"/>
<dbReference type="CTD" id="148808"/>
<dbReference type="eggNOG" id="ENOG502QRVK">
    <property type="taxonomic scope" value="Eukaryota"/>
</dbReference>
<dbReference type="InParanoid" id="Q5RCN7"/>
<dbReference type="OrthoDB" id="413079at2759"/>
<dbReference type="Proteomes" id="UP000001595">
    <property type="component" value="Unplaced"/>
</dbReference>
<dbReference type="GO" id="GO:0016020">
    <property type="term" value="C:membrane"/>
    <property type="evidence" value="ECO:0007669"/>
    <property type="project" value="UniProtKB-SubCell"/>
</dbReference>
<dbReference type="GO" id="GO:0022857">
    <property type="term" value="F:transmembrane transporter activity"/>
    <property type="evidence" value="ECO:0007669"/>
    <property type="project" value="InterPro"/>
</dbReference>
<dbReference type="CDD" id="cd17453">
    <property type="entry name" value="MFS_MFSD4A"/>
    <property type="match status" value="1"/>
</dbReference>
<dbReference type="Gene3D" id="1.20.1250.20">
    <property type="entry name" value="MFS general substrate transporter like domains"/>
    <property type="match status" value="2"/>
</dbReference>
<dbReference type="InterPro" id="IPR011701">
    <property type="entry name" value="MFS"/>
</dbReference>
<dbReference type="InterPro" id="IPR036259">
    <property type="entry name" value="MFS_trans_sf"/>
</dbReference>
<dbReference type="PANTHER" id="PTHR23121:SF10">
    <property type="entry name" value="MAJOR FACILITATOR SUPERFAMILY DOMAIN-CONTAINING PROTEIN 4A"/>
    <property type="match status" value="1"/>
</dbReference>
<dbReference type="PANTHER" id="PTHR23121">
    <property type="entry name" value="SODIUM-DEPENDENT GLUCOSE TRANSPORTER 1"/>
    <property type="match status" value="1"/>
</dbReference>
<dbReference type="Pfam" id="PF07690">
    <property type="entry name" value="MFS_1"/>
    <property type="match status" value="1"/>
</dbReference>
<dbReference type="SUPFAM" id="SSF103473">
    <property type="entry name" value="MFS general substrate transporter"/>
    <property type="match status" value="1"/>
</dbReference>
<sequence>MGCDGRVSGLLRRNLQPTLTYWSVFFSFGLCIAFLGPTLLDLRCQTHSSLPQISWVFLSQQLCLLLGSALGGVFKRTLAQSLWALFTSSLAISLVFAVIPFCRDVKVLALVMALAGLAMGCIDTVANMQLVRMYQKDSAVFLQVLHFFVGFGALLSPLIADPFLSEANCLPANSTANTTSRGHLFHVSRVLGQHHVDAKPWSNQTLPGLTPKDGSGTRVSYAFWIMALINLPVPMAVLMLLSKERLPTCCPQRRPLLLSADELALETQPPEKEDASSLPPKFQSHPGHEDLFSCCQRKNLRGAPYSFFAIHITAALVLFMTDGLTGAYSAFVYSYAVEKPLSVGHKVAGYLPSLFWGFITLGRLLSIPISSRMKPATMVFINVVGVVVTFLVLLIFSYNVVFLFVGTASLGLFLSSTFPSMLAYTEDSLQYKGCATTVLVTGAGVGEMVLQMLVGSIFQAQGSYSFLVCGVIFGCLAFTFYILLLFFHRMHPGLPSVPTQDRSIGMENSESYQR</sequence>
<feature type="chain" id="PRO_0000273397" description="Major facilitator superfamily domain-containing protein 4A">
    <location>
        <begin position="1"/>
        <end position="514"/>
    </location>
</feature>
<feature type="transmembrane region" description="Helical" evidence="1">
    <location>
        <begin position="19"/>
        <end position="39"/>
    </location>
</feature>
<feature type="transmembrane region" description="Helical" evidence="1">
    <location>
        <begin position="53"/>
        <end position="73"/>
    </location>
</feature>
<feature type="transmembrane region" description="Helical" evidence="1">
    <location>
        <begin position="82"/>
        <end position="102"/>
    </location>
</feature>
<feature type="transmembrane region" description="Helical" evidence="1">
    <location>
        <begin position="107"/>
        <end position="127"/>
    </location>
</feature>
<feature type="transmembrane region" description="Helical" evidence="1">
    <location>
        <begin position="139"/>
        <end position="159"/>
    </location>
</feature>
<feature type="transmembrane region" description="Helical" evidence="1">
    <location>
        <begin position="221"/>
        <end position="241"/>
    </location>
</feature>
<feature type="transmembrane region" description="Helical" evidence="1">
    <location>
        <begin position="307"/>
        <end position="327"/>
    </location>
</feature>
<feature type="transmembrane region" description="Helical" evidence="1">
    <location>
        <begin position="347"/>
        <end position="367"/>
    </location>
</feature>
<feature type="transmembrane region" description="Helical" evidence="1">
    <location>
        <begin position="376"/>
        <end position="396"/>
    </location>
</feature>
<feature type="transmembrane region" description="Helical" evidence="1">
    <location>
        <begin position="400"/>
        <end position="420"/>
    </location>
</feature>
<feature type="transmembrane region" description="Helical" evidence="1">
    <location>
        <begin position="438"/>
        <end position="458"/>
    </location>
</feature>
<feature type="transmembrane region" description="Helical" evidence="1">
    <location>
        <begin position="466"/>
        <end position="486"/>
    </location>
</feature>
<feature type="glycosylation site" description="N-linked (GlcNAc...) asparagine" evidence="1">
    <location>
        <position position="177"/>
    </location>
</feature>
<feature type="glycosylation site" description="N-linked (GlcNAc...) asparagine" evidence="1">
    <location>
        <position position="203"/>
    </location>
</feature>
<evidence type="ECO:0000255" key="1"/>
<evidence type="ECO:0000305" key="2"/>
<accession>Q5RCN7</accession>